<reference key="1">
    <citation type="journal article" date="2008" name="Proc. Natl. Acad. Sci. U.S.A.">
        <title>The genome sequence of Bifidobacterium longum subsp. infantis reveals adaptations for milk utilization within the infant microbiome.</title>
        <authorList>
            <person name="Sela D.A."/>
            <person name="Chapman J."/>
            <person name="Adeuya A."/>
            <person name="Kim J.H."/>
            <person name="Chen F."/>
            <person name="Whitehead T.R."/>
            <person name="Lapidus A."/>
            <person name="Rokhsar D.S."/>
            <person name="Lebrilla C.B."/>
            <person name="German J.B."/>
            <person name="Price N.P."/>
            <person name="Richardson P.M."/>
            <person name="Mills D.A."/>
        </authorList>
    </citation>
    <scope>NUCLEOTIDE SEQUENCE [LARGE SCALE GENOMIC DNA]</scope>
    <source>
        <strain>ATCC 15697 / DSM 20088 / JCM 1222 / NCTC 11817 / S12</strain>
    </source>
</reference>
<reference key="2">
    <citation type="journal article" date="2011" name="Nature">
        <title>Bifidobacteria can protect from enteropathogenic infection through production of acetate.</title>
        <authorList>
            <person name="Fukuda S."/>
            <person name="Toh H."/>
            <person name="Hase K."/>
            <person name="Oshima K."/>
            <person name="Nakanishi Y."/>
            <person name="Yoshimura K."/>
            <person name="Tobe T."/>
            <person name="Clarke J.M."/>
            <person name="Topping D.L."/>
            <person name="Suzuki T."/>
            <person name="Taylor T.D."/>
            <person name="Itoh K."/>
            <person name="Kikuchi J."/>
            <person name="Morita H."/>
            <person name="Hattori M."/>
            <person name="Ohno H."/>
        </authorList>
    </citation>
    <scope>NUCLEOTIDE SEQUENCE [LARGE SCALE GENOMIC DNA]</scope>
    <source>
        <strain>ATCC 15697 / DSM 20088 / JCM 1222 / NCTC 11817 / S12</strain>
    </source>
</reference>
<feature type="chain" id="PRO_1000189857" description="1-deoxy-D-xylulose 5-phosphate reductoisomerase">
    <location>
        <begin position="1"/>
        <end position="396"/>
    </location>
</feature>
<feature type="binding site" evidence="1">
    <location>
        <position position="15"/>
    </location>
    <ligand>
        <name>NADPH</name>
        <dbReference type="ChEBI" id="CHEBI:57783"/>
    </ligand>
</feature>
<feature type="binding site" evidence="1">
    <location>
        <position position="16"/>
    </location>
    <ligand>
        <name>NADPH</name>
        <dbReference type="ChEBI" id="CHEBI:57783"/>
    </ligand>
</feature>
<feature type="binding site" evidence="1">
    <location>
        <position position="17"/>
    </location>
    <ligand>
        <name>NADPH</name>
        <dbReference type="ChEBI" id="CHEBI:57783"/>
    </ligand>
</feature>
<feature type="binding site" evidence="1">
    <location>
        <position position="18"/>
    </location>
    <ligand>
        <name>NADPH</name>
        <dbReference type="ChEBI" id="CHEBI:57783"/>
    </ligand>
</feature>
<feature type="binding site" evidence="1">
    <location>
        <position position="41"/>
    </location>
    <ligand>
        <name>NADPH</name>
        <dbReference type="ChEBI" id="CHEBI:57783"/>
    </ligand>
</feature>
<feature type="binding site" evidence="1">
    <location>
        <position position="130"/>
    </location>
    <ligand>
        <name>NADPH</name>
        <dbReference type="ChEBI" id="CHEBI:57783"/>
    </ligand>
</feature>
<feature type="binding site" evidence="1">
    <location>
        <position position="131"/>
    </location>
    <ligand>
        <name>1-deoxy-D-xylulose 5-phosphate</name>
        <dbReference type="ChEBI" id="CHEBI:57792"/>
    </ligand>
</feature>
<feature type="binding site" evidence="1">
    <location>
        <position position="132"/>
    </location>
    <ligand>
        <name>NADPH</name>
        <dbReference type="ChEBI" id="CHEBI:57783"/>
    </ligand>
</feature>
<feature type="binding site" evidence="1">
    <location>
        <position position="155"/>
    </location>
    <ligand>
        <name>Mn(2+)</name>
        <dbReference type="ChEBI" id="CHEBI:29035"/>
    </ligand>
</feature>
<feature type="binding site" evidence="1">
    <location>
        <position position="156"/>
    </location>
    <ligand>
        <name>1-deoxy-D-xylulose 5-phosphate</name>
        <dbReference type="ChEBI" id="CHEBI:57792"/>
    </ligand>
</feature>
<feature type="binding site" evidence="1">
    <location>
        <position position="157"/>
    </location>
    <ligand>
        <name>1-deoxy-D-xylulose 5-phosphate</name>
        <dbReference type="ChEBI" id="CHEBI:57792"/>
    </ligand>
</feature>
<feature type="binding site" evidence="1">
    <location>
        <position position="157"/>
    </location>
    <ligand>
        <name>Mn(2+)</name>
        <dbReference type="ChEBI" id="CHEBI:29035"/>
    </ligand>
</feature>
<feature type="binding site" evidence="1">
    <location>
        <position position="181"/>
    </location>
    <ligand>
        <name>1-deoxy-D-xylulose 5-phosphate</name>
        <dbReference type="ChEBI" id="CHEBI:57792"/>
    </ligand>
</feature>
<feature type="binding site" evidence="1">
    <location>
        <position position="204"/>
    </location>
    <ligand>
        <name>1-deoxy-D-xylulose 5-phosphate</name>
        <dbReference type="ChEBI" id="CHEBI:57792"/>
    </ligand>
</feature>
<feature type="binding site" evidence="1">
    <location>
        <position position="210"/>
    </location>
    <ligand>
        <name>NADPH</name>
        <dbReference type="ChEBI" id="CHEBI:57783"/>
    </ligand>
</feature>
<feature type="binding site" evidence="1">
    <location>
        <position position="217"/>
    </location>
    <ligand>
        <name>1-deoxy-D-xylulose 5-phosphate</name>
        <dbReference type="ChEBI" id="CHEBI:57792"/>
    </ligand>
</feature>
<feature type="binding site" evidence="1">
    <location>
        <position position="222"/>
    </location>
    <ligand>
        <name>1-deoxy-D-xylulose 5-phosphate</name>
        <dbReference type="ChEBI" id="CHEBI:57792"/>
    </ligand>
</feature>
<feature type="binding site" evidence="1">
    <location>
        <position position="223"/>
    </location>
    <ligand>
        <name>1-deoxy-D-xylulose 5-phosphate</name>
        <dbReference type="ChEBI" id="CHEBI:57792"/>
    </ligand>
</feature>
<feature type="binding site" evidence="1">
    <location>
        <position position="226"/>
    </location>
    <ligand>
        <name>1-deoxy-D-xylulose 5-phosphate</name>
        <dbReference type="ChEBI" id="CHEBI:57792"/>
    </ligand>
</feature>
<feature type="binding site" evidence="1">
    <location>
        <position position="226"/>
    </location>
    <ligand>
        <name>Mn(2+)</name>
        <dbReference type="ChEBI" id="CHEBI:29035"/>
    </ligand>
</feature>
<dbReference type="EC" id="1.1.1.267" evidence="1"/>
<dbReference type="EMBL" id="CP001095">
    <property type="protein sequence ID" value="ACJ51882.1"/>
    <property type="molecule type" value="Genomic_DNA"/>
</dbReference>
<dbReference type="EMBL" id="AP010889">
    <property type="protein sequence ID" value="BAJ68386.1"/>
    <property type="molecule type" value="Genomic_DNA"/>
</dbReference>
<dbReference type="RefSeq" id="WP_012577163.1">
    <property type="nucleotide sequence ID" value="NC_011593.1"/>
</dbReference>
<dbReference type="SMR" id="B7GQ02"/>
<dbReference type="KEGG" id="bln:Blon_0779"/>
<dbReference type="KEGG" id="blon:BLIJ_0794"/>
<dbReference type="PATRIC" id="fig|391904.8.peg.800"/>
<dbReference type="HOGENOM" id="CLU_035714_4_0_11"/>
<dbReference type="UniPathway" id="UPA00056">
    <property type="reaction ID" value="UER00092"/>
</dbReference>
<dbReference type="Proteomes" id="UP000001360">
    <property type="component" value="Chromosome"/>
</dbReference>
<dbReference type="GO" id="GO:0030604">
    <property type="term" value="F:1-deoxy-D-xylulose-5-phosphate reductoisomerase activity"/>
    <property type="evidence" value="ECO:0007669"/>
    <property type="project" value="UniProtKB-UniRule"/>
</dbReference>
<dbReference type="GO" id="GO:0030145">
    <property type="term" value="F:manganese ion binding"/>
    <property type="evidence" value="ECO:0007669"/>
    <property type="project" value="TreeGrafter"/>
</dbReference>
<dbReference type="GO" id="GO:0070402">
    <property type="term" value="F:NADPH binding"/>
    <property type="evidence" value="ECO:0007669"/>
    <property type="project" value="InterPro"/>
</dbReference>
<dbReference type="GO" id="GO:0051484">
    <property type="term" value="P:isopentenyl diphosphate biosynthetic process, methylerythritol 4-phosphate pathway involved in terpenoid biosynthetic process"/>
    <property type="evidence" value="ECO:0007669"/>
    <property type="project" value="TreeGrafter"/>
</dbReference>
<dbReference type="FunFam" id="3.40.50.720:FF:000045">
    <property type="entry name" value="1-deoxy-D-xylulose 5-phosphate reductoisomerase"/>
    <property type="match status" value="1"/>
</dbReference>
<dbReference type="Gene3D" id="1.10.1740.10">
    <property type="match status" value="1"/>
</dbReference>
<dbReference type="Gene3D" id="3.40.50.720">
    <property type="entry name" value="NAD(P)-binding Rossmann-like Domain"/>
    <property type="match status" value="1"/>
</dbReference>
<dbReference type="HAMAP" id="MF_00183">
    <property type="entry name" value="DXP_reductoisom"/>
    <property type="match status" value="1"/>
</dbReference>
<dbReference type="InterPro" id="IPR003821">
    <property type="entry name" value="DXP_reductoisomerase"/>
</dbReference>
<dbReference type="InterPro" id="IPR013644">
    <property type="entry name" value="DXP_reductoisomerase_C"/>
</dbReference>
<dbReference type="InterPro" id="IPR013512">
    <property type="entry name" value="DXP_reductoisomerase_N"/>
</dbReference>
<dbReference type="InterPro" id="IPR026877">
    <property type="entry name" value="DXPR_C"/>
</dbReference>
<dbReference type="InterPro" id="IPR036169">
    <property type="entry name" value="DXPR_C_sf"/>
</dbReference>
<dbReference type="InterPro" id="IPR036291">
    <property type="entry name" value="NAD(P)-bd_dom_sf"/>
</dbReference>
<dbReference type="NCBIfam" id="TIGR00243">
    <property type="entry name" value="Dxr"/>
    <property type="match status" value="1"/>
</dbReference>
<dbReference type="PANTHER" id="PTHR30525">
    <property type="entry name" value="1-DEOXY-D-XYLULOSE 5-PHOSPHATE REDUCTOISOMERASE"/>
    <property type="match status" value="1"/>
</dbReference>
<dbReference type="PANTHER" id="PTHR30525:SF0">
    <property type="entry name" value="1-DEOXY-D-XYLULOSE 5-PHOSPHATE REDUCTOISOMERASE, CHLOROPLASTIC"/>
    <property type="match status" value="1"/>
</dbReference>
<dbReference type="Pfam" id="PF08436">
    <property type="entry name" value="DXP_redisom_C"/>
    <property type="match status" value="1"/>
</dbReference>
<dbReference type="Pfam" id="PF02670">
    <property type="entry name" value="DXP_reductoisom"/>
    <property type="match status" value="1"/>
</dbReference>
<dbReference type="Pfam" id="PF13288">
    <property type="entry name" value="DXPR_C"/>
    <property type="match status" value="1"/>
</dbReference>
<dbReference type="PIRSF" id="PIRSF006205">
    <property type="entry name" value="Dxp_reductismrs"/>
    <property type="match status" value="1"/>
</dbReference>
<dbReference type="SUPFAM" id="SSF69055">
    <property type="entry name" value="1-deoxy-D-xylulose-5-phosphate reductoisomerase, C-terminal domain"/>
    <property type="match status" value="1"/>
</dbReference>
<dbReference type="SUPFAM" id="SSF55347">
    <property type="entry name" value="Glyceraldehyde-3-phosphate dehydrogenase-like, C-terminal domain"/>
    <property type="match status" value="1"/>
</dbReference>
<dbReference type="SUPFAM" id="SSF51735">
    <property type="entry name" value="NAD(P)-binding Rossmann-fold domains"/>
    <property type="match status" value="1"/>
</dbReference>
<gene>
    <name evidence="1" type="primary">dxr</name>
    <name type="ordered locus">Blon_0779</name>
    <name type="ordered locus">BLIJ_0794</name>
</gene>
<keyword id="KW-0414">Isoprene biosynthesis</keyword>
<keyword id="KW-0464">Manganese</keyword>
<keyword id="KW-0479">Metal-binding</keyword>
<keyword id="KW-0521">NADP</keyword>
<keyword id="KW-0560">Oxidoreductase</keyword>
<sequence length="396" mass="41983">MSIASNSTVIILGSTGSIGTQGLDVIARHPERFTVTGLAAGGAHIELLAQQAAQFHVSEVAVFDETKIPALQAALAQAGAQGVRVTGGPDSVIAMAGSGANVVLNGITGSIGLEPSIAALKAGSQLALANKESVVAGGHLLFSAQVRENQINPVDSEHSAIWQSLRSGTHAEVAKLVVTASGGPFRGWKRADMENITPEQALHHPTWNMGPVVTINSSTLMNKGLEVIEASRLFDVPPERIDVTVHPQSIVHSMVEFVDGATICQASPPDMRLPIALGLSAPDRMANVAAACDWTKAATWTFEPLDDEAFPAVQLARHCLAASEKHTAVLNAANEQAVHAFLEHRLPYLGIVDTVKAVLDQMDAELRGNPLFTDVEEMNQLELEARRRADDLINKQ</sequence>
<protein>
    <recommendedName>
        <fullName evidence="1">1-deoxy-D-xylulose 5-phosphate reductoisomerase</fullName>
        <shortName evidence="1">DXP reductoisomerase</shortName>
        <ecNumber evidence="1">1.1.1.267</ecNumber>
    </recommendedName>
    <alternativeName>
        <fullName evidence="1">1-deoxyxylulose-5-phosphate reductoisomerase</fullName>
    </alternativeName>
    <alternativeName>
        <fullName evidence="1">2-C-methyl-D-erythritol 4-phosphate synthase</fullName>
    </alternativeName>
</protein>
<comment type="function">
    <text evidence="1">Catalyzes the NADPH-dependent rearrangement and reduction of 1-deoxy-D-xylulose-5-phosphate (DXP) to 2-C-methyl-D-erythritol 4-phosphate (MEP).</text>
</comment>
<comment type="catalytic activity">
    <reaction evidence="1">
        <text>2-C-methyl-D-erythritol 4-phosphate + NADP(+) = 1-deoxy-D-xylulose 5-phosphate + NADPH + H(+)</text>
        <dbReference type="Rhea" id="RHEA:13717"/>
        <dbReference type="ChEBI" id="CHEBI:15378"/>
        <dbReference type="ChEBI" id="CHEBI:57783"/>
        <dbReference type="ChEBI" id="CHEBI:57792"/>
        <dbReference type="ChEBI" id="CHEBI:58262"/>
        <dbReference type="ChEBI" id="CHEBI:58349"/>
        <dbReference type="EC" id="1.1.1.267"/>
    </reaction>
    <physiologicalReaction direction="right-to-left" evidence="1">
        <dbReference type="Rhea" id="RHEA:13719"/>
    </physiologicalReaction>
</comment>
<comment type="cofactor">
    <cofactor evidence="1">
        <name>Mg(2+)</name>
        <dbReference type="ChEBI" id="CHEBI:18420"/>
    </cofactor>
    <cofactor evidence="1">
        <name>Mn(2+)</name>
        <dbReference type="ChEBI" id="CHEBI:29035"/>
    </cofactor>
</comment>
<comment type="pathway">
    <text evidence="1">Isoprenoid biosynthesis; isopentenyl diphosphate biosynthesis via DXP pathway; isopentenyl diphosphate from 1-deoxy-D-xylulose 5-phosphate: step 1/6.</text>
</comment>
<comment type="similarity">
    <text evidence="1">Belongs to the DXR family.</text>
</comment>
<name>DXR_BIFLS</name>
<accession>B7GQ02</accession>
<accession>E8MQW1</accession>
<proteinExistence type="inferred from homology"/>
<organism>
    <name type="scientific">Bifidobacterium longum subsp. infantis (strain ATCC 15697 / DSM 20088 / JCM 1222 / NCTC 11817 / S12)</name>
    <dbReference type="NCBI Taxonomy" id="391904"/>
    <lineage>
        <taxon>Bacteria</taxon>
        <taxon>Bacillati</taxon>
        <taxon>Actinomycetota</taxon>
        <taxon>Actinomycetes</taxon>
        <taxon>Bifidobacteriales</taxon>
        <taxon>Bifidobacteriaceae</taxon>
        <taxon>Bifidobacterium</taxon>
    </lineage>
</organism>
<evidence type="ECO:0000255" key="1">
    <source>
        <dbReference type="HAMAP-Rule" id="MF_00183"/>
    </source>
</evidence>